<keyword id="KW-0106">Calcium</keyword>
<keyword id="KW-0903">Direct protein sequencing</keyword>
<keyword id="KW-0479">Metal-binding</keyword>
<keyword id="KW-0964">Secreted</keyword>
<evidence type="ECO:0000250" key="1">
    <source>
        <dbReference type="UniProtKB" id="P62022"/>
    </source>
</evidence>
<evidence type="ECO:0000269" key="2">
    <source>
    </source>
</evidence>
<evidence type="ECO:0000303" key="3">
    <source>
    </source>
</evidence>
<evidence type="ECO:0000305" key="4"/>
<name>PA2CS_RHIDP</name>
<proteinExistence type="evidence at protein level"/>
<feature type="chain" id="PRO_0000447719" description="Phospholipase A2 CS24a" evidence="4">
    <location>
        <begin position="1"/>
        <end position="39" status="greater than"/>
    </location>
</feature>
<feature type="chain" id="PRO_0000447720" description="Phospholipase A2 CS25-CS26" evidence="4">
    <location>
        <begin position="3"/>
        <end position="39" status="greater than"/>
    </location>
</feature>
<feature type="binding site" evidence="1">
    <location>
        <position position="27"/>
    </location>
    <ligand>
        <name>Ca(2+)</name>
        <dbReference type="ChEBI" id="CHEBI:29108"/>
    </ligand>
</feature>
<feature type="binding site" evidence="1">
    <location>
        <position position="29"/>
    </location>
    <ligand>
        <name>Ca(2+)</name>
        <dbReference type="ChEBI" id="CHEBI:29108"/>
    </ligand>
</feature>
<feature type="binding site" evidence="1">
    <location>
        <position position="31"/>
    </location>
    <ligand>
        <name>Ca(2+)</name>
        <dbReference type="ChEBI" id="CHEBI:29108"/>
    </ligand>
</feature>
<feature type="non-terminal residue" evidence="3">
    <location>
        <position position="39"/>
    </location>
</feature>
<reference evidence="4" key="1">
    <citation type="journal article" date="2018" name="J. Venom. Anim. Toxins Incl. Trop. Dis.">
        <title>Deep sequencing analysis of toad Rhinella schneideri skin glands and partial biochemical characterization of its cutaneous secretion.</title>
        <authorList>
            <person name="Shibao P.Y.T."/>
            <person name="Cologna C.T."/>
            <person name="Morandi-Filho R."/>
            <person name="Wiezel G.A."/>
            <person name="Fujimura P.T."/>
            <person name="Ueira-Vieira C."/>
            <person name="Arantes E.C."/>
        </authorList>
    </citation>
    <scope>PROTEIN SEQUENCE</scope>
    <scope>SUBCELLULAR LOCATION</scope>
    <scope>TISSUE SPECIFICITY</scope>
</reference>
<organism>
    <name type="scientific">Rhinella diptycha</name>
    <name type="common">Cururu toad</name>
    <name type="synonym">Rhinella schneideri</name>
    <dbReference type="NCBI Taxonomy" id="2736592"/>
    <lineage>
        <taxon>Eukaryota</taxon>
        <taxon>Metazoa</taxon>
        <taxon>Chordata</taxon>
        <taxon>Craniata</taxon>
        <taxon>Vertebrata</taxon>
        <taxon>Euteleostomi</taxon>
        <taxon>Amphibia</taxon>
        <taxon>Batrachia</taxon>
        <taxon>Anura</taxon>
        <taxon>Neobatrachia</taxon>
        <taxon>Hyloidea</taxon>
        <taxon>Bufonidae</taxon>
        <taxon>Rhinella</taxon>
    </lineage>
</organism>
<comment type="function">
    <text evidence="1">PLA2 catalyzes the calcium-dependent hydrolysis of the 2-acyl groups in 3-sn-phosphoglycerides.</text>
</comment>
<comment type="subcellular location">
    <subcellularLocation>
        <location evidence="2">Secreted</location>
    </subcellularLocation>
</comment>
<comment type="tissue specificity">
    <text evidence="2">Expressed by the skin glands.</text>
</comment>
<comment type="similarity">
    <text evidence="4">Belongs to the phospholipase A2 family.</text>
</comment>
<dbReference type="SMR" id="C0HLL0"/>
<dbReference type="GO" id="GO:0005576">
    <property type="term" value="C:extracellular region"/>
    <property type="evidence" value="ECO:0007669"/>
    <property type="project" value="UniProtKB-SubCell"/>
</dbReference>
<dbReference type="GO" id="GO:0005509">
    <property type="term" value="F:calcium ion binding"/>
    <property type="evidence" value="ECO:0007669"/>
    <property type="project" value="InterPro"/>
</dbReference>
<dbReference type="GO" id="GO:0004623">
    <property type="term" value="F:phospholipase A2 activity"/>
    <property type="evidence" value="ECO:0007669"/>
    <property type="project" value="InterPro"/>
</dbReference>
<dbReference type="GO" id="GO:0050482">
    <property type="term" value="P:arachidonate secretion"/>
    <property type="evidence" value="ECO:0007669"/>
    <property type="project" value="InterPro"/>
</dbReference>
<dbReference type="GO" id="GO:0016042">
    <property type="term" value="P:lipid catabolic process"/>
    <property type="evidence" value="ECO:0007669"/>
    <property type="project" value="InterPro"/>
</dbReference>
<dbReference type="GO" id="GO:0006644">
    <property type="term" value="P:phospholipid metabolic process"/>
    <property type="evidence" value="ECO:0007669"/>
    <property type="project" value="InterPro"/>
</dbReference>
<dbReference type="Gene3D" id="1.20.90.10">
    <property type="entry name" value="Phospholipase A2 domain"/>
    <property type="match status" value="1"/>
</dbReference>
<dbReference type="InterPro" id="IPR001211">
    <property type="entry name" value="PLipase_A2"/>
</dbReference>
<dbReference type="InterPro" id="IPR016090">
    <property type="entry name" value="PLipase_A2_dom"/>
</dbReference>
<dbReference type="InterPro" id="IPR036444">
    <property type="entry name" value="PLipase_A2_dom_sf"/>
</dbReference>
<dbReference type="Pfam" id="PF00068">
    <property type="entry name" value="Phospholip_A2_1"/>
    <property type="match status" value="1"/>
</dbReference>
<dbReference type="PRINTS" id="PR00389">
    <property type="entry name" value="PHPHLIPASEA2"/>
</dbReference>
<dbReference type="SUPFAM" id="SSF48619">
    <property type="entry name" value="Phospholipase A2, PLA2"/>
    <property type="match status" value="1"/>
</dbReference>
<accession>C0HLL0</accession>
<sequence>GLLEFNKMIKFETRKNAIPFYAFYGCYCGWGGRRRPKDA</sequence>
<protein>
    <recommendedName>
        <fullName evidence="3">Phospholipase A2 CS24a</fullName>
        <shortName evidence="4">PLA2</shortName>
        <shortName evidence="3">RsPLA2</shortName>
    </recommendedName>
    <component>
        <recommendedName>
            <fullName evidence="3">Phospholipase A2 CS25-CS26</fullName>
        </recommendedName>
    </component>
</protein>